<reference key="1">
    <citation type="journal article" date="2008" name="BMC Genomics">
        <title>The genome sequence of the fish pathogen Aliivibrio salmonicida strain LFI1238 shows extensive evidence of gene decay.</title>
        <authorList>
            <person name="Hjerde E."/>
            <person name="Lorentzen M.S."/>
            <person name="Holden M.T."/>
            <person name="Seeger K."/>
            <person name="Paulsen S."/>
            <person name="Bason N."/>
            <person name="Churcher C."/>
            <person name="Harris D."/>
            <person name="Norbertczak H."/>
            <person name="Quail M.A."/>
            <person name="Sanders S."/>
            <person name="Thurston S."/>
            <person name="Parkhill J."/>
            <person name="Willassen N.P."/>
            <person name="Thomson N.R."/>
        </authorList>
    </citation>
    <scope>NUCLEOTIDE SEQUENCE [LARGE SCALE GENOMIC DNA]</scope>
    <source>
        <strain>LFI1238</strain>
    </source>
</reference>
<keyword id="KW-0106">Calcium</keyword>
<keyword id="KW-0249">Electron transport</keyword>
<keyword id="KW-0349">Heme</keyword>
<keyword id="KW-0408">Iron</keyword>
<keyword id="KW-0479">Metal-binding</keyword>
<keyword id="KW-0560">Oxidoreductase</keyword>
<keyword id="KW-0574">Periplasm</keyword>
<keyword id="KW-0732">Signal</keyword>
<keyword id="KW-0813">Transport</keyword>
<protein>
    <recommendedName>
        <fullName evidence="1">Cytochrome c-552</fullName>
        <ecNumber evidence="1">1.7.2.2</ecNumber>
    </recommendedName>
    <alternativeName>
        <fullName evidence="1">Ammonia-forming cytochrome c nitrite reductase</fullName>
        <shortName evidence="1">Cytochrome c nitrite reductase</shortName>
    </alternativeName>
</protein>
<comment type="function">
    <text evidence="1">Catalyzes the reduction of nitrite to ammonia, consuming six electrons in the process.</text>
</comment>
<comment type="catalytic activity">
    <reaction evidence="1">
        <text>6 Fe(III)-[cytochrome c] + NH4(+) + 2 H2O = 6 Fe(II)-[cytochrome c] + nitrite + 8 H(+)</text>
        <dbReference type="Rhea" id="RHEA:13089"/>
        <dbReference type="Rhea" id="RHEA-COMP:10350"/>
        <dbReference type="Rhea" id="RHEA-COMP:14399"/>
        <dbReference type="ChEBI" id="CHEBI:15377"/>
        <dbReference type="ChEBI" id="CHEBI:15378"/>
        <dbReference type="ChEBI" id="CHEBI:16301"/>
        <dbReference type="ChEBI" id="CHEBI:28938"/>
        <dbReference type="ChEBI" id="CHEBI:29033"/>
        <dbReference type="ChEBI" id="CHEBI:29034"/>
        <dbReference type="EC" id="1.7.2.2"/>
    </reaction>
</comment>
<comment type="cofactor">
    <cofactor evidence="1">
        <name>Ca(2+)</name>
        <dbReference type="ChEBI" id="CHEBI:29108"/>
    </cofactor>
    <text evidence="1">Binds 1 Ca(2+) ion per monomer.</text>
</comment>
<comment type="cofactor">
    <cofactor evidence="1">
        <name>heme c</name>
        <dbReference type="ChEBI" id="CHEBI:61717"/>
    </cofactor>
    <text evidence="1">Binds 5 heme c groups covalently per monomer.</text>
</comment>
<comment type="pathway">
    <text evidence="1">Nitrogen metabolism; nitrate reduction (assimilation).</text>
</comment>
<comment type="subcellular location">
    <subcellularLocation>
        <location evidence="1">Periplasm</location>
    </subcellularLocation>
</comment>
<comment type="similarity">
    <text evidence="1">Belongs to the cytochrome c-552 family.</text>
</comment>
<accession>B6EH98</accession>
<organism>
    <name type="scientific">Aliivibrio salmonicida (strain LFI1238)</name>
    <name type="common">Vibrio salmonicida (strain LFI1238)</name>
    <dbReference type="NCBI Taxonomy" id="316275"/>
    <lineage>
        <taxon>Bacteria</taxon>
        <taxon>Pseudomonadati</taxon>
        <taxon>Pseudomonadota</taxon>
        <taxon>Gammaproteobacteria</taxon>
        <taxon>Vibrionales</taxon>
        <taxon>Vibrionaceae</taxon>
        <taxon>Aliivibrio</taxon>
    </lineage>
</organism>
<dbReference type="EC" id="1.7.2.2" evidence="1"/>
<dbReference type="EMBL" id="FM178379">
    <property type="protein sequence ID" value="CAQ79682.1"/>
    <property type="molecule type" value="Genomic_DNA"/>
</dbReference>
<dbReference type="RefSeq" id="WP_012550554.1">
    <property type="nucleotide sequence ID" value="NC_011312.1"/>
</dbReference>
<dbReference type="SMR" id="B6EH98"/>
<dbReference type="KEGG" id="vsa:VSAL_I1997"/>
<dbReference type="eggNOG" id="COG3303">
    <property type="taxonomic scope" value="Bacteria"/>
</dbReference>
<dbReference type="HOGENOM" id="CLU_035040_1_0_6"/>
<dbReference type="UniPathway" id="UPA00653"/>
<dbReference type="Proteomes" id="UP000001730">
    <property type="component" value="Chromosome 1"/>
</dbReference>
<dbReference type="GO" id="GO:0030288">
    <property type="term" value="C:outer membrane-bounded periplasmic space"/>
    <property type="evidence" value="ECO:0007669"/>
    <property type="project" value="TreeGrafter"/>
</dbReference>
<dbReference type="GO" id="GO:0005509">
    <property type="term" value="F:calcium ion binding"/>
    <property type="evidence" value="ECO:0007669"/>
    <property type="project" value="UniProtKB-UniRule"/>
</dbReference>
<dbReference type="GO" id="GO:0020037">
    <property type="term" value="F:heme binding"/>
    <property type="evidence" value="ECO:0007669"/>
    <property type="project" value="InterPro"/>
</dbReference>
<dbReference type="GO" id="GO:0005506">
    <property type="term" value="F:iron ion binding"/>
    <property type="evidence" value="ECO:0007669"/>
    <property type="project" value="UniProtKB-UniRule"/>
</dbReference>
<dbReference type="GO" id="GO:0042279">
    <property type="term" value="F:nitrite reductase (cytochrome, ammonia-forming) activity"/>
    <property type="evidence" value="ECO:0007669"/>
    <property type="project" value="UniProtKB-UniRule"/>
</dbReference>
<dbReference type="GO" id="GO:0019645">
    <property type="term" value="P:anaerobic electron transport chain"/>
    <property type="evidence" value="ECO:0007669"/>
    <property type="project" value="TreeGrafter"/>
</dbReference>
<dbReference type="GO" id="GO:0042128">
    <property type="term" value="P:nitrate assimilation"/>
    <property type="evidence" value="ECO:0007669"/>
    <property type="project" value="UniProtKB-UniRule"/>
</dbReference>
<dbReference type="CDD" id="cd00548">
    <property type="entry name" value="NrfA-like"/>
    <property type="match status" value="1"/>
</dbReference>
<dbReference type="FunFam" id="1.10.1130.10:FF:000002">
    <property type="entry name" value="Cytochrome c-552"/>
    <property type="match status" value="1"/>
</dbReference>
<dbReference type="FunFam" id="1.20.140.10:FF:000014">
    <property type="entry name" value="Cytochrome c-552"/>
    <property type="match status" value="1"/>
</dbReference>
<dbReference type="Gene3D" id="1.20.140.10">
    <property type="entry name" value="Butyryl-CoA Dehydrogenase, subunit A, domain 3"/>
    <property type="match status" value="1"/>
</dbReference>
<dbReference type="Gene3D" id="1.10.1130.10">
    <property type="entry name" value="Flavocytochrome C3, Chain A"/>
    <property type="match status" value="1"/>
</dbReference>
<dbReference type="HAMAP" id="MF_01182">
    <property type="entry name" value="Cytochrom_C552"/>
    <property type="match status" value="1"/>
</dbReference>
<dbReference type="InterPro" id="IPR003321">
    <property type="entry name" value="Cyt_c552"/>
</dbReference>
<dbReference type="InterPro" id="IPR017570">
    <property type="entry name" value="Cyt_c_NO2Rdtase_formate-dep"/>
</dbReference>
<dbReference type="InterPro" id="IPR036280">
    <property type="entry name" value="Multihaem_cyt_sf"/>
</dbReference>
<dbReference type="NCBIfam" id="TIGR03152">
    <property type="entry name" value="cyto_c552_HCOOH"/>
    <property type="match status" value="1"/>
</dbReference>
<dbReference type="NCBIfam" id="NF008339">
    <property type="entry name" value="PRK11125.1"/>
    <property type="match status" value="1"/>
</dbReference>
<dbReference type="PANTHER" id="PTHR30633:SF0">
    <property type="entry name" value="CYTOCHROME C-552"/>
    <property type="match status" value="1"/>
</dbReference>
<dbReference type="PANTHER" id="PTHR30633">
    <property type="entry name" value="CYTOCHROME C-552 RESPIRATORY NITRITE REDUCTASE"/>
    <property type="match status" value="1"/>
</dbReference>
<dbReference type="Pfam" id="PF02335">
    <property type="entry name" value="Cytochrom_C552"/>
    <property type="match status" value="1"/>
</dbReference>
<dbReference type="PIRSF" id="PIRSF000243">
    <property type="entry name" value="Cyt_c552"/>
    <property type="match status" value="1"/>
</dbReference>
<dbReference type="SUPFAM" id="SSF48695">
    <property type="entry name" value="Multiheme cytochromes"/>
    <property type="match status" value="1"/>
</dbReference>
<dbReference type="PROSITE" id="PS51008">
    <property type="entry name" value="MULTIHEME_CYTC"/>
    <property type="match status" value="1"/>
</dbReference>
<feature type="signal peptide" evidence="1">
    <location>
        <begin position="1"/>
        <end position="27"/>
    </location>
</feature>
<feature type="chain" id="PRO_5000405716" description="Cytochrome c-552">
    <location>
        <begin position="28"/>
        <end position="478"/>
    </location>
</feature>
<feature type="binding site" description="axial binding residue" evidence="1">
    <location>
        <position position="91"/>
    </location>
    <ligand>
        <name>heme c</name>
        <dbReference type="ChEBI" id="CHEBI:61717"/>
        <label>3</label>
    </ligand>
    <ligandPart>
        <name>Fe</name>
        <dbReference type="ChEBI" id="CHEBI:18248"/>
    </ligandPart>
</feature>
<feature type="binding site" description="covalent" evidence="1">
    <location>
        <position position="119"/>
    </location>
    <ligand>
        <name>heme</name>
        <dbReference type="ChEBI" id="CHEBI:30413"/>
        <label>1</label>
    </ligand>
</feature>
<feature type="binding site" description="covalent" evidence="1">
    <location>
        <position position="122"/>
    </location>
    <ligand>
        <name>heme</name>
        <dbReference type="ChEBI" id="CHEBI:30413"/>
        <label>1</label>
    </ligand>
</feature>
<feature type="binding site" description="axial binding residue" evidence="1">
    <location>
        <position position="123"/>
    </location>
    <ligand>
        <name>heme</name>
        <dbReference type="ChEBI" id="CHEBI:30413"/>
        <label>1</label>
    </ligand>
    <ligandPart>
        <name>Fe</name>
        <dbReference type="ChEBI" id="CHEBI:18248"/>
    </ligandPart>
</feature>
<feature type="binding site" description="covalent" evidence="1">
    <location>
        <position position="157"/>
    </location>
    <ligand>
        <name>heme c</name>
        <dbReference type="ChEBI" id="CHEBI:61717"/>
        <label>2</label>
    </ligand>
</feature>
<feature type="binding site" description="covalent" evidence="1">
    <location>
        <position position="160"/>
    </location>
    <ligand>
        <name>heme c</name>
        <dbReference type="ChEBI" id="CHEBI:61717"/>
        <label>2</label>
    </ligand>
</feature>
<feature type="binding site" description="axial binding residue" evidence="1">
    <location>
        <position position="161"/>
    </location>
    <ligand>
        <name>heme c</name>
        <dbReference type="ChEBI" id="CHEBI:61717"/>
        <label>2</label>
    </ligand>
    <ligandPart>
        <name>Fe</name>
        <dbReference type="ChEBI" id="CHEBI:18248"/>
    </ligandPart>
</feature>
<feature type="binding site" description="covalent" evidence="1">
    <location>
        <position position="206"/>
    </location>
    <ligand>
        <name>heme c</name>
        <dbReference type="ChEBI" id="CHEBI:61717"/>
        <label>3</label>
    </ligand>
</feature>
<feature type="binding site" description="covalent" evidence="1">
    <location>
        <position position="209"/>
    </location>
    <ligand>
        <name>heme c</name>
        <dbReference type="ChEBI" id="CHEBI:61717"/>
        <label>3</label>
    </ligand>
</feature>
<feature type="binding site" description="axial binding residue" evidence="1">
    <location>
        <position position="210"/>
    </location>
    <ligand>
        <name>heme c</name>
        <dbReference type="ChEBI" id="CHEBI:61717"/>
        <label>3</label>
    </ligand>
    <ligandPart>
        <name>Fe</name>
        <dbReference type="ChEBI" id="CHEBI:18248"/>
    </ligandPart>
</feature>
<feature type="binding site" evidence="1">
    <location>
        <position position="212"/>
    </location>
    <ligand>
        <name>Ca(2+)</name>
        <dbReference type="ChEBI" id="CHEBI:29108"/>
    </ligand>
</feature>
<feature type="binding site" evidence="1">
    <location>
        <position position="213"/>
    </location>
    <ligand>
        <name>Ca(2+)</name>
        <dbReference type="ChEBI" id="CHEBI:29108"/>
    </ligand>
</feature>
<feature type="binding site" evidence="1">
    <location>
        <position position="213"/>
    </location>
    <ligand>
        <name>substrate</name>
    </ligand>
</feature>
<feature type="binding site" evidence="1">
    <location>
        <position position="258"/>
    </location>
    <ligand>
        <name>Ca(2+)</name>
        <dbReference type="ChEBI" id="CHEBI:29108"/>
    </ligand>
</feature>
<feature type="binding site" evidence="1">
    <location>
        <position position="260"/>
    </location>
    <ligand>
        <name>Ca(2+)</name>
        <dbReference type="ChEBI" id="CHEBI:29108"/>
    </ligand>
</feature>
<feature type="binding site" evidence="1">
    <location>
        <position position="261"/>
    </location>
    <ligand>
        <name>substrate</name>
    </ligand>
</feature>
<feature type="binding site" description="axial binding residue" evidence="1">
    <location>
        <position position="272"/>
    </location>
    <ligand>
        <name>heme c</name>
        <dbReference type="ChEBI" id="CHEBI:61717"/>
        <label>5</label>
    </ligand>
    <ligandPart>
        <name>Fe</name>
        <dbReference type="ChEBI" id="CHEBI:18248"/>
    </ligandPart>
</feature>
<feature type="binding site" description="covalent" evidence="1">
    <location>
        <position position="279"/>
    </location>
    <ligand>
        <name>heme c</name>
        <dbReference type="ChEBI" id="CHEBI:61717"/>
        <label>4</label>
    </ligand>
</feature>
<feature type="binding site" description="covalent" evidence="1">
    <location>
        <position position="282"/>
    </location>
    <ligand>
        <name>heme c</name>
        <dbReference type="ChEBI" id="CHEBI:61717"/>
        <label>4</label>
    </ligand>
</feature>
<feature type="binding site" description="axial binding residue" evidence="1">
    <location>
        <position position="283"/>
    </location>
    <ligand>
        <name>heme c</name>
        <dbReference type="ChEBI" id="CHEBI:61717"/>
        <label>4</label>
    </ligand>
    <ligandPart>
        <name>Fe</name>
        <dbReference type="ChEBI" id="CHEBI:18248"/>
    </ligandPart>
</feature>
<feature type="binding site" description="axial binding residue" evidence="1">
    <location>
        <position position="298"/>
    </location>
    <ligand>
        <name>heme c</name>
        <dbReference type="ChEBI" id="CHEBI:61717"/>
        <label>2</label>
    </ligand>
    <ligandPart>
        <name>Fe</name>
        <dbReference type="ChEBI" id="CHEBI:18248"/>
    </ligandPart>
</feature>
<feature type="binding site" description="covalent" evidence="1">
    <location>
        <position position="311"/>
    </location>
    <ligand>
        <name>heme c</name>
        <dbReference type="ChEBI" id="CHEBI:61717"/>
        <label>5</label>
    </ligand>
</feature>
<feature type="binding site" description="covalent" evidence="1">
    <location>
        <position position="314"/>
    </location>
    <ligand>
        <name>heme c</name>
        <dbReference type="ChEBI" id="CHEBI:61717"/>
        <label>5</label>
    </ligand>
</feature>
<feature type="binding site" description="axial binding residue" evidence="1">
    <location>
        <position position="315"/>
    </location>
    <ligand>
        <name>heme c</name>
        <dbReference type="ChEBI" id="CHEBI:61717"/>
        <label>5</label>
    </ligand>
    <ligandPart>
        <name>Fe</name>
        <dbReference type="ChEBI" id="CHEBI:18248"/>
    </ligandPart>
</feature>
<feature type="binding site" description="axial binding residue" evidence="1">
    <location>
        <position position="390"/>
    </location>
    <ligand>
        <name>heme c</name>
        <dbReference type="ChEBI" id="CHEBI:61717"/>
        <label>4</label>
    </ligand>
    <ligandPart>
        <name>Fe</name>
        <dbReference type="ChEBI" id="CHEBI:18248"/>
    </ligandPart>
</feature>
<name>NRFA_ALISL</name>
<sequence>MKKQWTRRSAAAIAMVTTLLLSSHSFAASEKTERVDPRNEAYAKQHADQYESWRPTSDSVQIEDALAEDPNMVILWAGYGFAKDYNKARGHFYAIDDVRETLRTAGPTDENSGPMPMACWSCKSPDVGRVIEEQGEDGYFSGKWARLGSEIQNPIGCADCHDTRSEEFKNGGPALAITKPHVERAMNAIGKPFDDQSRLDKQASVCGQCHVEYYFTGKTKAVKFPWDKGTTVDEMEEYYDEIGFSDWTHKVSKAPMLKAQHPGYETWREGIHGKNKVVCVDCHMPKVTREDGTVYTDHKVGNPFDRFEDTCANCHTQSKDMLREIVSSRKAQVLKMKLTAERQIVAAHFEAGAAWDAGATKEEMAPILQDIRHAQWRWDYAIASHGIHMHAPEVALEVLGSAVDRAADARTKLVRLLAKKGITDPIEIPDISTKAAAQKALGMDMEGMEAEKKHFLETVVPKWDQQAKEREAADYHPL</sequence>
<evidence type="ECO:0000255" key="1">
    <source>
        <dbReference type="HAMAP-Rule" id="MF_01182"/>
    </source>
</evidence>
<gene>
    <name evidence="1" type="primary">nrfA</name>
    <name type="ordered locus">VSAL_I1997</name>
</gene>
<proteinExistence type="inferred from homology"/>